<dbReference type="EC" id="4.1.1.39" evidence="1"/>
<dbReference type="EMBL" id="AF102655">
    <property type="protein sequence ID" value="AAC73001.1"/>
    <property type="molecule type" value="Genomic_DNA"/>
</dbReference>
<dbReference type="SMR" id="O98671"/>
<dbReference type="GO" id="GO:0009507">
    <property type="term" value="C:chloroplast"/>
    <property type="evidence" value="ECO:0007669"/>
    <property type="project" value="UniProtKB-SubCell"/>
</dbReference>
<dbReference type="GO" id="GO:0000287">
    <property type="term" value="F:magnesium ion binding"/>
    <property type="evidence" value="ECO:0007669"/>
    <property type="project" value="InterPro"/>
</dbReference>
<dbReference type="GO" id="GO:0004497">
    <property type="term" value="F:monooxygenase activity"/>
    <property type="evidence" value="ECO:0007669"/>
    <property type="project" value="UniProtKB-KW"/>
</dbReference>
<dbReference type="GO" id="GO:0016984">
    <property type="term" value="F:ribulose-bisphosphate carboxylase activity"/>
    <property type="evidence" value="ECO:0007669"/>
    <property type="project" value="UniProtKB-EC"/>
</dbReference>
<dbReference type="GO" id="GO:0009853">
    <property type="term" value="P:photorespiration"/>
    <property type="evidence" value="ECO:0007669"/>
    <property type="project" value="UniProtKB-KW"/>
</dbReference>
<dbReference type="GO" id="GO:0019253">
    <property type="term" value="P:reductive pentose-phosphate cycle"/>
    <property type="evidence" value="ECO:0007669"/>
    <property type="project" value="UniProtKB-KW"/>
</dbReference>
<dbReference type="CDD" id="cd08212">
    <property type="entry name" value="RuBisCO_large_I"/>
    <property type="match status" value="1"/>
</dbReference>
<dbReference type="FunFam" id="3.20.20.110:FF:000001">
    <property type="entry name" value="Ribulose bisphosphate carboxylase large chain"/>
    <property type="match status" value="1"/>
</dbReference>
<dbReference type="FunFam" id="3.30.70.150:FF:000001">
    <property type="entry name" value="Ribulose bisphosphate carboxylase large chain"/>
    <property type="match status" value="1"/>
</dbReference>
<dbReference type="Gene3D" id="3.20.20.110">
    <property type="entry name" value="Ribulose bisphosphate carboxylase, large subunit, C-terminal domain"/>
    <property type="match status" value="1"/>
</dbReference>
<dbReference type="Gene3D" id="3.30.70.150">
    <property type="entry name" value="RuBisCO large subunit, N-terminal domain"/>
    <property type="match status" value="1"/>
</dbReference>
<dbReference type="HAMAP" id="MF_01338">
    <property type="entry name" value="RuBisCO_L_type1"/>
    <property type="match status" value="1"/>
</dbReference>
<dbReference type="InterPro" id="IPR033966">
    <property type="entry name" value="RuBisCO"/>
</dbReference>
<dbReference type="InterPro" id="IPR020878">
    <property type="entry name" value="RuBisCo_large_chain_AS"/>
</dbReference>
<dbReference type="InterPro" id="IPR000685">
    <property type="entry name" value="RuBisCO_lsu_C"/>
</dbReference>
<dbReference type="InterPro" id="IPR036376">
    <property type="entry name" value="RuBisCO_lsu_C_sf"/>
</dbReference>
<dbReference type="InterPro" id="IPR017443">
    <property type="entry name" value="RuBisCO_lsu_fd_N"/>
</dbReference>
<dbReference type="InterPro" id="IPR036422">
    <property type="entry name" value="RuBisCO_lsu_N_sf"/>
</dbReference>
<dbReference type="InterPro" id="IPR020888">
    <property type="entry name" value="RuBisCO_lsuI"/>
</dbReference>
<dbReference type="NCBIfam" id="NF003252">
    <property type="entry name" value="PRK04208.1"/>
    <property type="match status" value="1"/>
</dbReference>
<dbReference type="PANTHER" id="PTHR42704">
    <property type="entry name" value="RIBULOSE BISPHOSPHATE CARBOXYLASE"/>
    <property type="match status" value="1"/>
</dbReference>
<dbReference type="PANTHER" id="PTHR42704:SF15">
    <property type="entry name" value="RIBULOSE BISPHOSPHATE CARBOXYLASE LARGE CHAIN"/>
    <property type="match status" value="1"/>
</dbReference>
<dbReference type="Pfam" id="PF00016">
    <property type="entry name" value="RuBisCO_large"/>
    <property type="match status" value="1"/>
</dbReference>
<dbReference type="Pfam" id="PF02788">
    <property type="entry name" value="RuBisCO_large_N"/>
    <property type="match status" value="1"/>
</dbReference>
<dbReference type="SFLD" id="SFLDG01052">
    <property type="entry name" value="RuBisCO"/>
    <property type="match status" value="1"/>
</dbReference>
<dbReference type="SFLD" id="SFLDS00014">
    <property type="entry name" value="RuBisCO"/>
    <property type="match status" value="1"/>
</dbReference>
<dbReference type="SFLD" id="SFLDG00301">
    <property type="entry name" value="RuBisCO-like_proteins"/>
    <property type="match status" value="1"/>
</dbReference>
<dbReference type="SUPFAM" id="SSF51649">
    <property type="entry name" value="RuBisCo, C-terminal domain"/>
    <property type="match status" value="1"/>
</dbReference>
<dbReference type="SUPFAM" id="SSF54966">
    <property type="entry name" value="RuBisCO, large subunit, small (N-terminal) domain"/>
    <property type="match status" value="1"/>
</dbReference>
<dbReference type="PROSITE" id="PS00157">
    <property type="entry name" value="RUBISCO_LARGE"/>
    <property type="match status" value="1"/>
</dbReference>
<protein>
    <recommendedName>
        <fullName evidence="1">Ribulose bisphosphate carboxylase large chain</fullName>
        <shortName evidence="1">RuBisCO large subunit</shortName>
        <ecNumber evidence="1">4.1.1.39</ecNumber>
    </recommendedName>
</protein>
<accession>O98671</accession>
<proteinExistence type="inferred from homology"/>
<organism>
    <name type="scientific">Tecoma stans</name>
    <name type="common">Yellow bells</name>
    <name type="synonym">Stenolobium stans</name>
    <dbReference type="NCBI Taxonomy" id="69904"/>
    <lineage>
        <taxon>Eukaryota</taxon>
        <taxon>Viridiplantae</taxon>
        <taxon>Streptophyta</taxon>
        <taxon>Embryophyta</taxon>
        <taxon>Tracheophyta</taxon>
        <taxon>Spermatophyta</taxon>
        <taxon>Magnoliopsida</taxon>
        <taxon>eudicotyledons</taxon>
        <taxon>Gunneridae</taxon>
        <taxon>Pentapetalae</taxon>
        <taxon>asterids</taxon>
        <taxon>lamiids</taxon>
        <taxon>Lamiales</taxon>
        <taxon>Bignoniaceae</taxon>
        <taxon>Tecomeae</taxon>
        <taxon>Tecoma</taxon>
    </lineage>
</organism>
<reference key="1">
    <citation type="submission" date="1998-10" db="EMBL/GenBank/DDBJ databases">
        <title>Phylogenetic analysis of Bignoniaceae using the cpDNA sequences of rbcL and ndhF.</title>
        <authorList>
            <person name="Spangler R.E."/>
            <person name="Olmstead R.G."/>
        </authorList>
    </citation>
    <scope>NUCLEOTIDE SEQUENCE [GENOMIC DNA]</scope>
</reference>
<feature type="chain" id="PRO_0000062603" description="Ribulose bisphosphate carboxylase large chain">
    <location>
        <begin position="1" status="less than"/>
        <end position="468"/>
    </location>
</feature>
<feature type="active site" description="Proton acceptor" evidence="1">
    <location>
        <position position="166"/>
    </location>
</feature>
<feature type="active site" description="Proton acceptor" evidence="1">
    <location>
        <position position="285"/>
    </location>
</feature>
<feature type="binding site" description="in homodimeric partner" evidence="1">
    <location>
        <position position="114"/>
    </location>
    <ligand>
        <name>substrate</name>
    </ligand>
</feature>
<feature type="binding site" evidence="1">
    <location>
        <position position="164"/>
    </location>
    <ligand>
        <name>substrate</name>
    </ligand>
</feature>
<feature type="binding site" evidence="1">
    <location>
        <position position="168"/>
    </location>
    <ligand>
        <name>substrate</name>
    </ligand>
</feature>
<feature type="binding site" description="via carbamate group" evidence="1">
    <location>
        <position position="192"/>
    </location>
    <ligand>
        <name>Mg(2+)</name>
        <dbReference type="ChEBI" id="CHEBI:18420"/>
    </ligand>
</feature>
<feature type="binding site" evidence="1">
    <location>
        <position position="194"/>
    </location>
    <ligand>
        <name>Mg(2+)</name>
        <dbReference type="ChEBI" id="CHEBI:18420"/>
    </ligand>
</feature>
<feature type="binding site" evidence="1">
    <location>
        <position position="195"/>
    </location>
    <ligand>
        <name>Mg(2+)</name>
        <dbReference type="ChEBI" id="CHEBI:18420"/>
    </ligand>
</feature>
<feature type="binding site" evidence="1">
    <location>
        <position position="286"/>
    </location>
    <ligand>
        <name>substrate</name>
    </ligand>
</feature>
<feature type="binding site" evidence="1">
    <location>
        <position position="318"/>
    </location>
    <ligand>
        <name>substrate</name>
    </ligand>
</feature>
<feature type="binding site" evidence="1">
    <location>
        <position position="370"/>
    </location>
    <ligand>
        <name>substrate</name>
    </ligand>
</feature>
<feature type="site" description="Transition state stabilizer" evidence="1">
    <location>
        <position position="325"/>
    </location>
</feature>
<feature type="modified residue" description="N6,N6,N6-trimethyllysine" evidence="1">
    <location>
        <position position="5"/>
    </location>
</feature>
<feature type="modified residue" description="N6-carboxylysine" evidence="1">
    <location>
        <position position="192"/>
    </location>
</feature>
<feature type="disulfide bond" description="Interchain; in linked form" evidence="1">
    <location>
        <position position="238"/>
    </location>
</feature>
<feature type="non-terminal residue">
    <location>
        <position position="1"/>
    </location>
</feature>
<keyword id="KW-0113">Calvin cycle</keyword>
<keyword id="KW-0120">Carbon dioxide fixation</keyword>
<keyword id="KW-0150">Chloroplast</keyword>
<keyword id="KW-1015">Disulfide bond</keyword>
<keyword id="KW-0456">Lyase</keyword>
<keyword id="KW-0460">Magnesium</keyword>
<keyword id="KW-0479">Metal-binding</keyword>
<keyword id="KW-0488">Methylation</keyword>
<keyword id="KW-0503">Monooxygenase</keyword>
<keyword id="KW-0560">Oxidoreductase</keyword>
<keyword id="KW-0601">Photorespiration</keyword>
<keyword id="KW-0602">Photosynthesis</keyword>
<keyword id="KW-0934">Plastid</keyword>
<evidence type="ECO:0000255" key="1">
    <source>
        <dbReference type="HAMAP-Rule" id="MF_01338"/>
    </source>
</evidence>
<name>RBL_TECST</name>
<sequence length="468" mass="51837">SVGFKAGVKEYKLTYYTPEYETKDTDILAAFRVTPQPGVPPEEAGAAVAAESSTGTWTTVWTDGLTSLDRYKGRCYHIEPVPGEADQYICYVAYPLDLFEEGSVTNMFTSIVGNVFGFKALRALRLEDLRIPPAYIKTFQGPPHGIQVERDKLNKYGRPLLGCTIKPKLGLSAKNYGRAVYECLRGGLDFTKDDENVNSQPFMRWRDRFLFCAEALYKAQAETGEIKGHYLNATAGTCEEMIKRAVFARELGVPIVMHDYLTGGFTANTSLAHYCRDNGLLLHIHRAMHAVIDRQKNHGIHFRVLAKALRMSGGDHIHSGTVVGKLEGERDITLGFVDLLRDDFIEKDRSRGIYFTQDWVSLPGVIPVASGGIHVWHMPALTEIFGDDSVLQFGGGTLGHPWGNAPGAVANRVALEACVKARNEGRDLAAEGNTIIREASKWSLELAAACEVWKEIKFEFAAVDTLDR</sequence>
<geneLocation type="chloroplast"/>
<comment type="function">
    <text evidence="1">RuBisCO catalyzes two reactions: the carboxylation of D-ribulose 1,5-bisphosphate, the primary event in carbon dioxide fixation, as well as the oxidative fragmentation of the pentose substrate in the photorespiration process. Both reactions occur simultaneously and in competition at the same active site.</text>
</comment>
<comment type="catalytic activity">
    <reaction evidence="1">
        <text>2 (2R)-3-phosphoglycerate + 2 H(+) = D-ribulose 1,5-bisphosphate + CO2 + H2O</text>
        <dbReference type="Rhea" id="RHEA:23124"/>
        <dbReference type="ChEBI" id="CHEBI:15377"/>
        <dbReference type="ChEBI" id="CHEBI:15378"/>
        <dbReference type="ChEBI" id="CHEBI:16526"/>
        <dbReference type="ChEBI" id="CHEBI:57870"/>
        <dbReference type="ChEBI" id="CHEBI:58272"/>
        <dbReference type="EC" id="4.1.1.39"/>
    </reaction>
</comment>
<comment type="catalytic activity">
    <reaction evidence="1">
        <text>D-ribulose 1,5-bisphosphate + O2 = 2-phosphoglycolate + (2R)-3-phosphoglycerate + 2 H(+)</text>
        <dbReference type="Rhea" id="RHEA:36631"/>
        <dbReference type="ChEBI" id="CHEBI:15378"/>
        <dbReference type="ChEBI" id="CHEBI:15379"/>
        <dbReference type="ChEBI" id="CHEBI:57870"/>
        <dbReference type="ChEBI" id="CHEBI:58033"/>
        <dbReference type="ChEBI" id="CHEBI:58272"/>
    </reaction>
</comment>
<comment type="cofactor">
    <cofactor evidence="1">
        <name>Mg(2+)</name>
        <dbReference type="ChEBI" id="CHEBI:18420"/>
    </cofactor>
    <text evidence="1">Binds 1 Mg(2+) ion per subunit.</text>
</comment>
<comment type="subunit">
    <text evidence="1">Heterohexadecamer of 8 large chains and 8 small chains; disulfide-linked. The disulfide link is formed within the large subunit homodimers.</text>
</comment>
<comment type="subcellular location">
    <subcellularLocation>
        <location>Plastid</location>
        <location>Chloroplast</location>
    </subcellularLocation>
</comment>
<comment type="PTM">
    <text evidence="1">The disulfide bond which can form in the large chain dimeric partners within the hexadecamer appears to be associated with oxidative stress and protein turnover.</text>
</comment>
<comment type="miscellaneous">
    <text evidence="1">The basic functional RuBisCO is composed of a large chain homodimer in a 'head-to-tail' conformation. In form I RuBisCO this homodimer is arranged in a barrel-like tetramer with the small subunits forming a tetrameric 'cap' on each end of the 'barrel'.</text>
</comment>
<comment type="similarity">
    <text evidence="1">Belongs to the RuBisCO large chain family. Type I subfamily.</text>
</comment>
<gene>
    <name evidence="1" type="primary">rbcL</name>
</gene>